<sequence length="444" mass="47175">MNHSRSHALFVQAQTRIPGGVNSPVRAFRSVGGEPFFVARADGPYLFDVDGHRYIDYVGSWGPMIVGHNHPAVREAVQVAISNGLSYGAPCAAEVTMAETIARLVPSCEMVRMVNSGTEATLSAIRLARGATGRNYIVKFEGCYHGHGDSFLVKGGSGMLTLGIPSSPGVPAELSKLTITLTYNDFDAATALFEEMGHHIAAVIVEPVIGNANCIPPQPGYLQHLRTLCTQYAVLLIFDEVMTGFRVALGGAQALYGVTPDLTTFGKIIGGGMPVGAYGGRRDLMQHIAPTGPIYQAGTLSGNPVAMAAGLAMLELIQAPDFYTHLSNAAAALCTGLQQAASQAGIAMTTQQIGGMFGLFFTDQQVETYAQATACNTDRFNRFFHAMLQRGVFFAPSAYEAGFISSAHSPNIIETTLEAARTAFQTIANEAAILSKSETPIKMR</sequence>
<dbReference type="EC" id="5.4.3.8" evidence="1"/>
<dbReference type="EMBL" id="AE009442">
    <property type="protein sequence ID" value="AAO29182.1"/>
    <property type="molecule type" value="Genomic_DNA"/>
</dbReference>
<dbReference type="RefSeq" id="WP_004089531.1">
    <property type="nucleotide sequence ID" value="NC_004556.1"/>
</dbReference>
<dbReference type="SMR" id="Q87BW3"/>
<dbReference type="GeneID" id="93905152"/>
<dbReference type="KEGG" id="xft:PD_1335"/>
<dbReference type="HOGENOM" id="CLU_016922_1_5_6"/>
<dbReference type="UniPathway" id="UPA00251">
    <property type="reaction ID" value="UER00317"/>
</dbReference>
<dbReference type="Proteomes" id="UP000002516">
    <property type="component" value="Chromosome"/>
</dbReference>
<dbReference type="GO" id="GO:0005737">
    <property type="term" value="C:cytoplasm"/>
    <property type="evidence" value="ECO:0007669"/>
    <property type="project" value="UniProtKB-SubCell"/>
</dbReference>
<dbReference type="GO" id="GO:0042286">
    <property type="term" value="F:glutamate-1-semialdehyde 2,1-aminomutase activity"/>
    <property type="evidence" value="ECO:0007669"/>
    <property type="project" value="UniProtKB-UniRule"/>
</dbReference>
<dbReference type="GO" id="GO:0030170">
    <property type="term" value="F:pyridoxal phosphate binding"/>
    <property type="evidence" value="ECO:0007669"/>
    <property type="project" value="InterPro"/>
</dbReference>
<dbReference type="GO" id="GO:0008483">
    <property type="term" value="F:transaminase activity"/>
    <property type="evidence" value="ECO:0007669"/>
    <property type="project" value="InterPro"/>
</dbReference>
<dbReference type="GO" id="GO:0006782">
    <property type="term" value="P:protoporphyrinogen IX biosynthetic process"/>
    <property type="evidence" value="ECO:0007669"/>
    <property type="project" value="UniProtKB-UniRule"/>
</dbReference>
<dbReference type="CDD" id="cd00610">
    <property type="entry name" value="OAT_like"/>
    <property type="match status" value="1"/>
</dbReference>
<dbReference type="FunFam" id="3.40.640.10:FF:000021">
    <property type="entry name" value="Glutamate-1-semialdehyde 2,1-aminomutase"/>
    <property type="match status" value="1"/>
</dbReference>
<dbReference type="Gene3D" id="3.90.1150.10">
    <property type="entry name" value="Aspartate Aminotransferase, domain 1"/>
    <property type="match status" value="1"/>
</dbReference>
<dbReference type="Gene3D" id="3.40.640.10">
    <property type="entry name" value="Type I PLP-dependent aspartate aminotransferase-like (Major domain)"/>
    <property type="match status" value="1"/>
</dbReference>
<dbReference type="HAMAP" id="MF_00375">
    <property type="entry name" value="HemL_aminotrans_3"/>
    <property type="match status" value="1"/>
</dbReference>
<dbReference type="InterPro" id="IPR004639">
    <property type="entry name" value="4pyrrol_synth_GluAld_NH2Trfase"/>
</dbReference>
<dbReference type="InterPro" id="IPR005814">
    <property type="entry name" value="Aminotrans_3"/>
</dbReference>
<dbReference type="InterPro" id="IPR049704">
    <property type="entry name" value="Aminotrans_3_PPA_site"/>
</dbReference>
<dbReference type="InterPro" id="IPR015424">
    <property type="entry name" value="PyrdxlP-dep_Trfase"/>
</dbReference>
<dbReference type="InterPro" id="IPR015421">
    <property type="entry name" value="PyrdxlP-dep_Trfase_major"/>
</dbReference>
<dbReference type="InterPro" id="IPR015422">
    <property type="entry name" value="PyrdxlP-dep_Trfase_small"/>
</dbReference>
<dbReference type="NCBIfam" id="TIGR00713">
    <property type="entry name" value="hemL"/>
    <property type="match status" value="1"/>
</dbReference>
<dbReference type="NCBIfam" id="NF000818">
    <property type="entry name" value="PRK00062.1"/>
    <property type="match status" value="1"/>
</dbReference>
<dbReference type="PANTHER" id="PTHR43713">
    <property type="entry name" value="GLUTAMATE-1-SEMIALDEHYDE 2,1-AMINOMUTASE"/>
    <property type="match status" value="1"/>
</dbReference>
<dbReference type="PANTHER" id="PTHR43713:SF3">
    <property type="entry name" value="GLUTAMATE-1-SEMIALDEHYDE 2,1-AMINOMUTASE 1, CHLOROPLASTIC-RELATED"/>
    <property type="match status" value="1"/>
</dbReference>
<dbReference type="Pfam" id="PF00202">
    <property type="entry name" value="Aminotran_3"/>
    <property type="match status" value="1"/>
</dbReference>
<dbReference type="SUPFAM" id="SSF53383">
    <property type="entry name" value="PLP-dependent transferases"/>
    <property type="match status" value="1"/>
</dbReference>
<dbReference type="PROSITE" id="PS00600">
    <property type="entry name" value="AA_TRANSFER_CLASS_3"/>
    <property type="match status" value="1"/>
</dbReference>
<feature type="chain" id="PRO_0000120473" description="Glutamate-1-semialdehyde 2,1-aminomutase">
    <location>
        <begin position="1"/>
        <end position="444"/>
    </location>
</feature>
<feature type="modified residue" description="N6-(pyridoxal phosphate)lysine" evidence="1">
    <location>
        <position position="267"/>
    </location>
</feature>
<reference key="1">
    <citation type="journal article" date="2003" name="J. Bacteriol.">
        <title>Comparative analyses of the complete genome sequences of Pierce's disease and citrus variegated chlorosis strains of Xylella fastidiosa.</title>
        <authorList>
            <person name="Van Sluys M.A."/>
            <person name="de Oliveira M.C."/>
            <person name="Monteiro-Vitorello C.B."/>
            <person name="Miyaki C.Y."/>
            <person name="Furlan L.R."/>
            <person name="Camargo L.E.A."/>
            <person name="da Silva A.C.R."/>
            <person name="Moon D.H."/>
            <person name="Takita M.A."/>
            <person name="Lemos E.G.M."/>
            <person name="Machado M.A."/>
            <person name="Ferro M.I.T."/>
            <person name="da Silva F.R."/>
            <person name="Goldman M.H.S."/>
            <person name="Goldman G.H."/>
            <person name="Lemos M.V.F."/>
            <person name="El-Dorry H."/>
            <person name="Tsai S.M."/>
            <person name="Carrer H."/>
            <person name="Carraro D.M."/>
            <person name="de Oliveira R.C."/>
            <person name="Nunes L.R."/>
            <person name="Siqueira W.J."/>
            <person name="Coutinho L.L."/>
            <person name="Kimura E.T."/>
            <person name="Ferro E.S."/>
            <person name="Harakava R."/>
            <person name="Kuramae E.E."/>
            <person name="Marino C.L."/>
            <person name="Giglioti E."/>
            <person name="Abreu I.L."/>
            <person name="Alves L.M.C."/>
            <person name="do Amaral A.M."/>
            <person name="Baia G.S."/>
            <person name="Blanco S.R."/>
            <person name="Brito M.S."/>
            <person name="Cannavan F.S."/>
            <person name="Celestino A.V."/>
            <person name="da Cunha A.F."/>
            <person name="Fenille R.C."/>
            <person name="Ferro J.A."/>
            <person name="Formighieri E.F."/>
            <person name="Kishi L.T."/>
            <person name="Leoni S.G."/>
            <person name="Oliveira A.R."/>
            <person name="Rosa V.E. Jr."/>
            <person name="Sassaki F.T."/>
            <person name="Sena J.A.D."/>
            <person name="de Souza A.A."/>
            <person name="Truffi D."/>
            <person name="Tsukumo F."/>
            <person name="Yanai G.M."/>
            <person name="Zaros L.G."/>
            <person name="Civerolo E.L."/>
            <person name="Simpson A.J.G."/>
            <person name="Almeida N.F. Jr."/>
            <person name="Setubal J.C."/>
            <person name="Kitajima J.P."/>
        </authorList>
    </citation>
    <scope>NUCLEOTIDE SEQUENCE [LARGE SCALE GENOMIC DNA]</scope>
    <source>
        <strain>Temecula1 / ATCC 700964</strain>
    </source>
</reference>
<protein>
    <recommendedName>
        <fullName evidence="1">Glutamate-1-semialdehyde 2,1-aminomutase</fullName>
        <shortName evidence="1">GSA</shortName>
        <ecNumber evidence="1">5.4.3.8</ecNumber>
    </recommendedName>
    <alternativeName>
        <fullName evidence="1">Glutamate-1-semialdehyde aminotransferase</fullName>
        <shortName evidence="1">GSA-AT</shortName>
    </alternativeName>
</protein>
<organism>
    <name type="scientific">Xylella fastidiosa (strain Temecula1 / ATCC 700964)</name>
    <dbReference type="NCBI Taxonomy" id="183190"/>
    <lineage>
        <taxon>Bacteria</taxon>
        <taxon>Pseudomonadati</taxon>
        <taxon>Pseudomonadota</taxon>
        <taxon>Gammaproteobacteria</taxon>
        <taxon>Lysobacterales</taxon>
        <taxon>Lysobacteraceae</taxon>
        <taxon>Xylella</taxon>
    </lineage>
</organism>
<keyword id="KW-0963">Cytoplasm</keyword>
<keyword id="KW-0413">Isomerase</keyword>
<keyword id="KW-0627">Porphyrin biosynthesis</keyword>
<keyword id="KW-0663">Pyridoxal phosphate</keyword>
<keyword id="KW-1185">Reference proteome</keyword>
<evidence type="ECO:0000255" key="1">
    <source>
        <dbReference type="HAMAP-Rule" id="MF_00375"/>
    </source>
</evidence>
<name>GSA_XYLFT</name>
<comment type="catalytic activity">
    <reaction evidence="1">
        <text>(S)-4-amino-5-oxopentanoate = 5-aminolevulinate</text>
        <dbReference type="Rhea" id="RHEA:14265"/>
        <dbReference type="ChEBI" id="CHEBI:57501"/>
        <dbReference type="ChEBI" id="CHEBI:356416"/>
        <dbReference type="EC" id="5.4.3.8"/>
    </reaction>
</comment>
<comment type="cofactor">
    <cofactor evidence="1">
        <name>pyridoxal 5'-phosphate</name>
        <dbReference type="ChEBI" id="CHEBI:597326"/>
    </cofactor>
</comment>
<comment type="pathway">
    <text evidence="1">Porphyrin-containing compound metabolism; protoporphyrin-IX biosynthesis; 5-aminolevulinate from L-glutamyl-tRNA(Glu): step 2/2.</text>
</comment>
<comment type="subunit">
    <text evidence="1">Homodimer.</text>
</comment>
<comment type="subcellular location">
    <subcellularLocation>
        <location evidence="1">Cytoplasm</location>
    </subcellularLocation>
</comment>
<comment type="similarity">
    <text evidence="1">Belongs to the class-III pyridoxal-phosphate-dependent aminotransferase family. HemL subfamily.</text>
</comment>
<proteinExistence type="inferred from homology"/>
<gene>
    <name evidence="1" type="primary">hemL</name>
    <name type="ordered locus">PD_1335</name>
</gene>
<accession>Q87BW3</accession>